<keyword id="KW-0007">Acetylation</keyword>
<keyword id="KW-0025">Alternative splicing</keyword>
<keyword id="KW-0256">Endoplasmic reticulum</keyword>
<keyword id="KW-0325">Glycoprotein</keyword>
<keyword id="KW-0472">Membrane</keyword>
<keyword id="KW-1185">Reference proteome</keyword>
<keyword id="KW-0812">Transmembrane</keyword>
<keyword id="KW-1133">Transmembrane helix</keyword>
<sequence>MSEHAAAPGPGPNGGGGGGAAPVRGPRGPNLNPNPLINVRDRLFHALFFKMAVTYSRLFPPAFRRLFEFFVLLKALFVLFVLAYIHIVFSRSPINCLEHVRDRWPREGVLRVEVRHNSSRAPVILQFCDGGLGGLELEPGGLELEEEELTVEMFTNSSIKFELDIEPKVFKPQSGADALNDSQDFPFPETPAKVWPQDEYIVEYSLEYGFLRLSQATRQRLSIPVMVVTLDPTRDQCFGDRFSRLLLDEFLGYDDILMSSVKGLAENEENKGFLRNVVSGEHYRFVSMWMARTSYLAAFVIMVIFTLSVSMLLRYSHHQIFVFIVDLLQMLEMNMAIAFPAAPLLTVILALVGMEAIMSEFFNDTTTAFYIILTVWLADQYDAICCHTNTSKRHWLRFFYLYHFAFYAYHYRFNGQYSSLALVTSWLFIQHSMIYFFHHYELPAILQQIRIQEMLLQTPPLGPGTPTALPDDLNNNSGSPATPDPSPPLALGPSSSPAPTGGASGPGSLGAGASVSGSDLGWVAETAAIISDASFLSGLSASLLERRPTAPSTPDSSRPDPGVPLEDAPAPAGS</sequence>
<organism>
    <name type="scientific">Mus musculus</name>
    <name type="common">Mouse</name>
    <dbReference type="NCBI Taxonomy" id="10090"/>
    <lineage>
        <taxon>Eukaryota</taxon>
        <taxon>Metazoa</taxon>
        <taxon>Chordata</taxon>
        <taxon>Craniata</taxon>
        <taxon>Vertebrata</taxon>
        <taxon>Euteleostomi</taxon>
        <taxon>Mammalia</taxon>
        <taxon>Eutheria</taxon>
        <taxon>Euarchontoglires</taxon>
        <taxon>Glires</taxon>
        <taxon>Rodentia</taxon>
        <taxon>Myomorpha</taxon>
        <taxon>Muroidea</taxon>
        <taxon>Muridae</taxon>
        <taxon>Murinae</taxon>
        <taxon>Mus</taxon>
        <taxon>Mus</taxon>
    </lineage>
</organism>
<reference key="1">
    <citation type="journal article" date="2002" name="Gene Expr. Patterns">
        <title>Characterization and expression of the gene encoding membralin, an evolutionary conserved protein expressed in the central nervous system.</title>
        <authorList>
            <person name="Andersson O."/>
            <person name="von Euler G."/>
        </authorList>
    </citation>
    <scope>NUCLEOTIDE SEQUENCE [MRNA] (ISOFORMS 1 AND 2)</scope>
    <source>
        <tissue>Brain</tissue>
    </source>
</reference>
<reference key="2">
    <citation type="journal article" date="2004" name="Genome Res.">
        <title>The status, quality, and expansion of the NIH full-length cDNA project: the Mammalian Gene Collection (MGC).</title>
        <authorList>
            <consortium name="The MGC Project Team"/>
        </authorList>
    </citation>
    <scope>NUCLEOTIDE SEQUENCE [LARGE SCALE MRNA] OF 91-574 (ISOFORM 1)</scope>
    <source>
        <tissue>Mammary gland</tissue>
    </source>
</reference>
<reference key="3">
    <citation type="journal article" date="2004" name="DNA Res.">
        <title>Prediction of the coding sequences of mouse homologues of FLJ genes: the complete nucleotide sequences of 110 mouse FLJ-homologous cDNAs identified by screening of terminal sequences of cDNA clones randomly sampled from size-fractionated libraries.</title>
        <authorList>
            <person name="Okazaki N."/>
            <person name="Kikuno R."/>
            <person name="Ohara R."/>
            <person name="Inamoto S."/>
            <person name="Koseki H."/>
            <person name="Hiraoka S."/>
            <person name="Saga Y."/>
            <person name="Kitamura H."/>
            <person name="Nakagawa T."/>
            <person name="Nagase T."/>
            <person name="Ohara O."/>
            <person name="Koga H."/>
        </authorList>
    </citation>
    <scope>NUCLEOTIDE SEQUENCE [LARGE SCALE MRNA] OF 374-574</scope>
    <source>
        <tissue>Embryonic tail</tissue>
    </source>
</reference>
<reference key="4">
    <citation type="journal article" date="2009" name="Nat. Biotechnol.">
        <title>Mass-spectrometric identification and relative quantification of N-linked cell surface glycoproteins.</title>
        <authorList>
            <person name="Wollscheid B."/>
            <person name="Bausch-Fluck D."/>
            <person name="Henderson C."/>
            <person name="O'Brien R."/>
            <person name="Bibel M."/>
            <person name="Schiess R."/>
            <person name="Aebersold R."/>
            <person name="Watts J.D."/>
        </authorList>
    </citation>
    <scope>GLYCOSYLATION [LARGE SCALE ANALYSIS] AT ASN-180</scope>
</reference>
<reference key="5">
    <citation type="journal article" date="2010" name="Cell">
        <title>A tissue-specific atlas of mouse protein phosphorylation and expression.</title>
        <authorList>
            <person name="Huttlin E.L."/>
            <person name="Jedrychowski M.P."/>
            <person name="Elias J.E."/>
            <person name="Goswami T."/>
            <person name="Rad R."/>
            <person name="Beausoleil S.A."/>
            <person name="Villen J."/>
            <person name="Haas W."/>
            <person name="Sowa M.E."/>
            <person name="Gygi S.P."/>
        </authorList>
    </citation>
    <scope>IDENTIFICATION BY MASS SPECTROMETRY [LARGE SCALE ANALYSIS]</scope>
    <source>
        <tissue>Brown adipose tissue</tissue>
        <tissue>Lung</tissue>
    </source>
</reference>
<reference key="6">
    <citation type="journal article" date="2015" name="Elife">
        <title>The critical role of membralin in postnatal motor neuron survival and disease.</title>
        <authorList>
            <person name="Yang B."/>
            <person name="Qu M."/>
            <person name="Wang R."/>
            <person name="Chatterton J.E."/>
            <person name="Liu X.B."/>
            <person name="Zhu B."/>
            <person name="Narisawa S."/>
            <person name="Millan J.L."/>
            <person name="Nakanishi N."/>
            <person name="Swoboda K."/>
            <person name="Lipton S.A."/>
            <person name="Zhang D."/>
        </authorList>
    </citation>
    <scope>FUNCTION</scope>
    <scope>INTERACTION WITH ERLIN2</scope>
    <scope>SUBCELLULAR LOCATION</scope>
    <scope>TISSUE SPECIFICITY</scope>
    <scope>DISRUPTION PHENOTYPE</scope>
</reference>
<protein>
    <recommendedName>
        <fullName>Membralin</fullName>
    </recommendedName>
    <alternativeName>
        <fullName>Transmembrane protein 259</fullName>
    </alternativeName>
</protein>
<accession>Q8CIV2</accession>
<accession>Q68EE1</accession>
<accession>Q6KAN7</accession>
<accession>Q7TS84</accession>
<accession>Q8CIV1</accession>
<accession>Q99K29</accession>
<comment type="function">
    <text evidence="5">May have a role in the ERAD pathway required for clearance of misfolded proteins in the endoplasmic reticulum (ER). Promotes survival of motor neurons, probably by protecting against ER stress.</text>
</comment>
<comment type="subunit">
    <text evidence="5">Interacts with ERLIN2.</text>
</comment>
<comment type="subcellular location">
    <subcellularLocation>
        <location evidence="5">Endoplasmic reticulum membrane</location>
        <topology evidence="2">Multi-pass membrane protein</topology>
    </subcellularLocation>
</comment>
<comment type="alternative products">
    <event type="alternative splicing"/>
    <isoform>
        <id>Q8CIV2-1</id>
        <name>1</name>
        <name>Membralin-1</name>
        <sequence type="displayed"/>
    </isoform>
    <isoform>
        <id>Q8CIV2-2</id>
        <name>2</name>
        <name>Membralin-2</name>
        <sequence type="described" ref="VSP_014379"/>
    </isoform>
</comment>
<comment type="tissue specificity">
    <text evidence="5">Detected in brain, spinal cord, lung, liver and kidney.</text>
</comment>
<comment type="disruption phenotype">
    <text evidence="5">Lethality typically occurs several days after birth, associated with motor neuron deficiency and paresis.</text>
</comment>
<comment type="similarity">
    <text evidence="7">Belongs to the membralin family.</text>
</comment>
<comment type="sequence caution" evidence="7">
    <conflict type="erroneous initiation">
        <sequence resource="EMBL-CDS" id="AAH52787"/>
    </conflict>
</comment>
<name>MBRL_MOUSE</name>
<proteinExistence type="evidence at protein level"/>
<feature type="initiator methionine" description="Removed" evidence="1">
    <location>
        <position position="1"/>
    </location>
</feature>
<feature type="chain" id="PRO_0000096274" description="Membralin">
    <location>
        <begin position="2"/>
        <end position="574"/>
    </location>
</feature>
<feature type="transmembrane region" description="Helical" evidence="2">
    <location>
        <begin position="69"/>
        <end position="89"/>
    </location>
</feature>
<feature type="transmembrane region" description="Helical" evidence="2">
    <location>
        <begin position="293"/>
        <end position="313"/>
    </location>
</feature>
<feature type="transmembrane region" description="Helical" evidence="2">
    <location>
        <begin position="337"/>
        <end position="357"/>
    </location>
</feature>
<feature type="transmembrane region" description="Helical" evidence="2">
    <location>
        <begin position="417"/>
        <end position="437"/>
    </location>
</feature>
<feature type="region of interest" description="Disordered" evidence="3">
    <location>
        <begin position="1"/>
        <end position="27"/>
    </location>
</feature>
<feature type="region of interest" description="Disordered" evidence="3">
    <location>
        <begin position="461"/>
        <end position="515"/>
    </location>
</feature>
<feature type="region of interest" description="Disordered" evidence="3">
    <location>
        <begin position="546"/>
        <end position="574"/>
    </location>
</feature>
<feature type="compositionally biased region" description="Low complexity" evidence="3">
    <location>
        <begin position="461"/>
        <end position="470"/>
    </location>
</feature>
<feature type="compositionally biased region" description="Low complexity" evidence="3">
    <location>
        <begin position="491"/>
        <end position="501"/>
    </location>
</feature>
<feature type="modified residue" description="N-acetylserine" evidence="1">
    <location>
        <position position="2"/>
    </location>
</feature>
<feature type="glycosylation site" description="N-linked (GlcNAc...) asparagine" evidence="4">
    <location>
        <position position="180"/>
    </location>
</feature>
<feature type="splice variant" id="VSP_014379" description="In isoform 2." evidence="6">
    <original>I</original>
    <variation>IGESQPAGGGVGSPQALMGGRPVPA</variation>
    <location>
        <position position="324"/>
    </location>
</feature>
<feature type="sequence conflict" description="In Ref. 1; AAM34493." evidence="7" ref="1">
    <original>A</original>
    <variation>V</variation>
    <location>
        <position position="83"/>
    </location>
</feature>
<feature type="sequence conflict" description="In Ref. 1; AAM34492." evidence="7" ref="1">
    <original>N</original>
    <variation>D</variation>
    <location>
        <position position="95"/>
    </location>
</feature>
<feature type="sequence conflict" description="In Ref. 1; AAM34492." evidence="7" ref="1">
    <original>D</original>
    <variation>V</variation>
    <location>
        <position position="198"/>
    </location>
</feature>
<feature type="sequence conflict" description="In Ref. 1; AAM34493." evidence="7" ref="1">
    <original>P</original>
    <variation>S</variation>
    <location>
        <position position="224"/>
    </location>
</feature>
<feature type="sequence conflict" description="In Ref. 1; AAM34493." evidence="7" ref="1">
    <original>E</original>
    <variation>G</variation>
    <location>
        <position position="281"/>
    </location>
</feature>
<feature type="sequence conflict" description="In Ref. 1; AAM34493." evidence="7" ref="1">
    <original>I</original>
    <variation>F</variation>
    <location>
        <position position="301"/>
    </location>
</feature>
<feature type="sequence conflict" description="In Ref. 1; AAM34492." evidence="7" ref="1">
    <original>F</original>
    <variation>S</variation>
    <location>
        <position position="339"/>
    </location>
</feature>
<feature type="sequence conflict" description="In Ref. 1; AAM34493." evidence="7" ref="1">
    <original>M</original>
    <variation>V</variation>
    <location>
        <position position="354"/>
    </location>
</feature>
<feature type="sequence conflict" description="In Ref. 3." evidence="7" ref="3">
    <original>TVWLADQYDAICCHTNTSKRHWL</original>
    <variation>GASWAPGWDREGPVWQGSFSRPH</variation>
    <location>
        <begin position="374"/>
        <end position="396"/>
    </location>
</feature>
<feature type="sequence conflict" description="In Ref. 1; AAM34493." evidence="7" ref="1">
    <original>V</original>
    <variation>D</variation>
    <location>
        <position position="423"/>
    </location>
</feature>
<feature type="sequence conflict" description="In Ref. 1; AAM34493." evidence="7" ref="1">
    <original>S</original>
    <variation>N</variation>
    <location>
        <position position="540"/>
    </location>
</feature>
<evidence type="ECO:0000250" key="1">
    <source>
        <dbReference type="UniProtKB" id="Q4ZIN3"/>
    </source>
</evidence>
<evidence type="ECO:0000255" key="2"/>
<evidence type="ECO:0000256" key="3">
    <source>
        <dbReference type="SAM" id="MobiDB-lite"/>
    </source>
</evidence>
<evidence type="ECO:0000269" key="4">
    <source>
    </source>
</evidence>
<evidence type="ECO:0000269" key="5">
    <source>
    </source>
</evidence>
<evidence type="ECO:0000303" key="6">
    <source>
    </source>
</evidence>
<evidence type="ECO:0000305" key="7"/>
<dbReference type="EMBL" id="AY096037">
    <property type="protein sequence ID" value="AAM34493.1"/>
    <property type="molecule type" value="mRNA"/>
</dbReference>
<dbReference type="EMBL" id="AY096036">
    <property type="protein sequence ID" value="AAM34492.1"/>
    <property type="molecule type" value="mRNA"/>
</dbReference>
<dbReference type="EMBL" id="BC005494">
    <property type="protein sequence ID" value="AAH05494.1"/>
    <property type="molecule type" value="mRNA"/>
</dbReference>
<dbReference type="EMBL" id="BC052787">
    <property type="protein sequence ID" value="AAH52787.1"/>
    <property type="status" value="ALT_INIT"/>
    <property type="molecule type" value="mRNA"/>
</dbReference>
<dbReference type="EMBL" id="AK131170">
    <property type="protein sequence ID" value="BAD21420.1"/>
    <property type="molecule type" value="mRNA"/>
</dbReference>
<dbReference type="CCDS" id="CCDS24002.1">
    <molecule id="Q8CIV2-1"/>
</dbReference>
<dbReference type="RefSeq" id="NP_001003949.2">
    <molecule id="Q8CIV2-1"/>
    <property type="nucleotide sequence ID" value="NM_001003949.3"/>
</dbReference>
<dbReference type="RefSeq" id="NP_001346561.1">
    <molecule id="Q8CIV2-2"/>
    <property type="nucleotide sequence ID" value="NM_001359632.1"/>
</dbReference>
<dbReference type="RefSeq" id="XP_006513553.1">
    <property type="nucleotide sequence ID" value="XM_006513490.1"/>
</dbReference>
<dbReference type="BioGRID" id="229711">
    <property type="interactions" value="2"/>
</dbReference>
<dbReference type="FunCoup" id="Q8CIV2">
    <property type="interactions" value="1414"/>
</dbReference>
<dbReference type="IntAct" id="Q8CIV2">
    <property type="interactions" value="1"/>
</dbReference>
<dbReference type="STRING" id="10090.ENSMUSP00000056792"/>
<dbReference type="GlyConnect" id="2506">
    <property type="glycosylation" value="5 N-Linked glycans (1 site)"/>
</dbReference>
<dbReference type="GlyCosmos" id="Q8CIV2">
    <property type="glycosylation" value="1 site, 5 glycans"/>
</dbReference>
<dbReference type="GlyGen" id="Q8CIV2">
    <property type="glycosylation" value="4 sites, 7 N-linked glycans (2 sites)"/>
</dbReference>
<dbReference type="iPTMnet" id="Q8CIV2"/>
<dbReference type="PhosphoSitePlus" id="Q8CIV2"/>
<dbReference type="PaxDb" id="10090-ENSMUSP00000056792"/>
<dbReference type="PeptideAtlas" id="Q8CIV2"/>
<dbReference type="ProteomicsDB" id="295973">
    <molecule id="Q8CIV2-1"/>
</dbReference>
<dbReference type="ProteomicsDB" id="295974">
    <molecule id="Q8CIV2-2"/>
</dbReference>
<dbReference type="Pumba" id="Q8CIV2"/>
<dbReference type="Antibodypedia" id="10308">
    <property type="antibodies" value="67 antibodies from 17 providers"/>
</dbReference>
<dbReference type="DNASU" id="216157"/>
<dbReference type="Ensembl" id="ENSMUST00000052885.14">
    <molecule id="Q8CIV2-1"/>
    <property type="protein sequence ID" value="ENSMUSP00000056792.8"/>
    <property type="gene ID" value="ENSMUSG00000013858.15"/>
</dbReference>
<dbReference type="GeneID" id="216157"/>
<dbReference type="KEGG" id="mmu:216157"/>
<dbReference type="UCSC" id="uc007gax.1">
    <molecule id="Q8CIV2-1"/>
    <property type="organism name" value="mouse"/>
</dbReference>
<dbReference type="UCSC" id="uc007gay.1">
    <molecule id="Q8CIV2-2"/>
    <property type="organism name" value="mouse"/>
</dbReference>
<dbReference type="AGR" id="MGI:2177957"/>
<dbReference type="CTD" id="91304"/>
<dbReference type="MGI" id="MGI:2177957">
    <property type="gene designation" value="Tmem259"/>
</dbReference>
<dbReference type="VEuPathDB" id="HostDB:ENSMUSG00000013858"/>
<dbReference type="eggNOG" id="KOG2092">
    <property type="taxonomic scope" value="Eukaryota"/>
</dbReference>
<dbReference type="GeneTree" id="ENSGT00390000013329"/>
<dbReference type="InParanoid" id="Q8CIV2"/>
<dbReference type="OMA" id="TELPHND"/>
<dbReference type="PhylomeDB" id="Q8CIV2"/>
<dbReference type="TreeFam" id="TF313323"/>
<dbReference type="BioGRID-ORCS" id="216157">
    <property type="hits" value="4 hits in 77 CRISPR screens"/>
</dbReference>
<dbReference type="ChiTaRS" id="Tmem259">
    <property type="organism name" value="mouse"/>
</dbReference>
<dbReference type="PRO" id="PR:Q8CIV2"/>
<dbReference type="Proteomes" id="UP000000589">
    <property type="component" value="Chromosome 10"/>
</dbReference>
<dbReference type="RNAct" id="Q8CIV2">
    <property type="molecule type" value="protein"/>
</dbReference>
<dbReference type="Bgee" id="ENSMUSG00000013858">
    <property type="expression patterns" value="Expressed in ankle joint and 255 other cell types or tissues"/>
</dbReference>
<dbReference type="ExpressionAtlas" id="Q8CIV2">
    <property type="expression patterns" value="baseline and differential"/>
</dbReference>
<dbReference type="GO" id="GO:0005783">
    <property type="term" value="C:endoplasmic reticulum"/>
    <property type="evidence" value="ECO:0000314"/>
    <property type="project" value="UniProtKB"/>
</dbReference>
<dbReference type="GO" id="GO:0005789">
    <property type="term" value="C:endoplasmic reticulum membrane"/>
    <property type="evidence" value="ECO:0007669"/>
    <property type="project" value="UniProtKB-SubCell"/>
</dbReference>
<dbReference type="GO" id="GO:1904294">
    <property type="term" value="P:positive regulation of ERAD pathway"/>
    <property type="evidence" value="ECO:0000314"/>
    <property type="project" value="UniProtKB"/>
</dbReference>
<dbReference type="GO" id="GO:0034976">
    <property type="term" value="P:response to endoplasmic reticulum stress"/>
    <property type="evidence" value="ECO:0000315"/>
    <property type="project" value="UniProtKB"/>
</dbReference>
<dbReference type="InterPro" id="IPR019144">
    <property type="entry name" value="Membralin"/>
</dbReference>
<dbReference type="PANTHER" id="PTHR21650:SF4">
    <property type="entry name" value="MEMBRALIN"/>
    <property type="match status" value="1"/>
</dbReference>
<dbReference type="PANTHER" id="PTHR21650">
    <property type="entry name" value="MEMBRALIN/KINETOCHORE PROTEIN NUF2"/>
    <property type="match status" value="1"/>
</dbReference>
<dbReference type="Pfam" id="PF09746">
    <property type="entry name" value="Membralin"/>
    <property type="match status" value="2"/>
</dbReference>
<gene>
    <name type="primary">Tmem259</name>
    <name type="synonym">ORF61</name>
</gene>